<organism>
    <name type="scientific">Myxococcus xanthus (strain DK1622)</name>
    <dbReference type="NCBI Taxonomy" id="246197"/>
    <lineage>
        <taxon>Bacteria</taxon>
        <taxon>Pseudomonadati</taxon>
        <taxon>Myxococcota</taxon>
        <taxon>Myxococcia</taxon>
        <taxon>Myxococcales</taxon>
        <taxon>Cystobacterineae</taxon>
        <taxon>Myxococcaceae</taxon>
        <taxon>Myxococcus</taxon>
    </lineage>
</organism>
<dbReference type="EMBL" id="CP000113">
    <property type="protein sequence ID" value="ABF89958.1"/>
    <property type="molecule type" value="Genomic_DNA"/>
</dbReference>
<dbReference type="SMR" id="Q1D767"/>
<dbReference type="STRING" id="246197.MXAN_3307"/>
<dbReference type="EnsemblBacteria" id="ABF89958">
    <property type="protein sequence ID" value="ABF89958"/>
    <property type="gene ID" value="MXAN_3307"/>
</dbReference>
<dbReference type="KEGG" id="mxa:MXAN_3307"/>
<dbReference type="eggNOG" id="COG0255">
    <property type="taxonomic scope" value="Bacteria"/>
</dbReference>
<dbReference type="HOGENOM" id="CLU_158491_5_2_7"/>
<dbReference type="Proteomes" id="UP000002402">
    <property type="component" value="Chromosome"/>
</dbReference>
<dbReference type="GO" id="GO:1990904">
    <property type="term" value="C:ribonucleoprotein complex"/>
    <property type="evidence" value="ECO:0007669"/>
    <property type="project" value="UniProtKB-KW"/>
</dbReference>
<dbReference type="GO" id="GO:0005840">
    <property type="term" value="C:ribosome"/>
    <property type="evidence" value="ECO:0007669"/>
    <property type="project" value="UniProtKB-KW"/>
</dbReference>
<dbReference type="GO" id="GO:0003735">
    <property type="term" value="F:structural constituent of ribosome"/>
    <property type="evidence" value="ECO:0007669"/>
    <property type="project" value="InterPro"/>
</dbReference>
<dbReference type="GO" id="GO:0006412">
    <property type="term" value="P:translation"/>
    <property type="evidence" value="ECO:0007669"/>
    <property type="project" value="UniProtKB-UniRule"/>
</dbReference>
<dbReference type="CDD" id="cd00427">
    <property type="entry name" value="Ribosomal_L29_HIP"/>
    <property type="match status" value="1"/>
</dbReference>
<dbReference type="Gene3D" id="1.10.287.310">
    <property type="match status" value="1"/>
</dbReference>
<dbReference type="HAMAP" id="MF_00374">
    <property type="entry name" value="Ribosomal_uL29"/>
    <property type="match status" value="1"/>
</dbReference>
<dbReference type="InterPro" id="IPR001854">
    <property type="entry name" value="Ribosomal_uL29"/>
</dbReference>
<dbReference type="InterPro" id="IPR036049">
    <property type="entry name" value="Ribosomal_uL29_sf"/>
</dbReference>
<dbReference type="NCBIfam" id="TIGR00012">
    <property type="entry name" value="L29"/>
    <property type="match status" value="1"/>
</dbReference>
<dbReference type="Pfam" id="PF00831">
    <property type="entry name" value="Ribosomal_L29"/>
    <property type="match status" value="1"/>
</dbReference>
<dbReference type="SUPFAM" id="SSF46561">
    <property type="entry name" value="Ribosomal protein L29 (L29p)"/>
    <property type="match status" value="1"/>
</dbReference>
<proteinExistence type="inferred from homology"/>
<evidence type="ECO:0000255" key="1">
    <source>
        <dbReference type="HAMAP-Rule" id="MF_00374"/>
    </source>
</evidence>
<evidence type="ECO:0000256" key="2">
    <source>
        <dbReference type="SAM" id="MobiDB-lite"/>
    </source>
</evidence>
<evidence type="ECO:0000305" key="3"/>
<gene>
    <name evidence="1" type="primary">rpmC</name>
    <name type="ordered locus">MXAN_3307</name>
</gene>
<accession>Q1D767</accession>
<protein>
    <recommendedName>
        <fullName evidence="1">Large ribosomal subunit protein uL29</fullName>
    </recommendedName>
    <alternativeName>
        <fullName evidence="3">50S ribosomal protein L29</fullName>
    </alternativeName>
</protein>
<name>RL29_MYXXD</name>
<reference key="1">
    <citation type="journal article" date="2006" name="Proc. Natl. Acad. Sci. U.S.A.">
        <title>Evolution of sensory complexity recorded in a myxobacterial genome.</title>
        <authorList>
            <person name="Goldman B.S."/>
            <person name="Nierman W.C."/>
            <person name="Kaiser D."/>
            <person name="Slater S.C."/>
            <person name="Durkin A.S."/>
            <person name="Eisen J.A."/>
            <person name="Ronning C.M."/>
            <person name="Barbazuk W.B."/>
            <person name="Blanchard M."/>
            <person name="Field C."/>
            <person name="Halling C."/>
            <person name="Hinkle G."/>
            <person name="Iartchuk O."/>
            <person name="Kim H.S."/>
            <person name="Mackenzie C."/>
            <person name="Madupu R."/>
            <person name="Miller N."/>
            <person name="Shvartsbeyn A."/>
            <person name="Sullivan S.A."/>
            <person name="Vaudin M."/>
            <person name="Wiegand R."/>
            <person name="Kaplan H.B."/>
        </authorList>
    </citation>
    <scope>NUCLEOTIDE SEQUENCE [LARGE SCALE GENOMIC DNA]</scope>
    <source>
        <strain>DK1622</strain>
    </source>
</reference>
<comment type="similarity">
    <text evidence="1">Belongs to the universal ribosomal protein uL29 family.</text>
</comment>
<keyword id="KW-1185">Reference proteome</keyword>
<keyword id="KW-0687">Ribonucleoprotein</keyword>
<keyword id="KW-0689">Ribosomal protein</keyword>
<feature type="chain" id="PRO_1000079893" description="Large ribosomal subunit protein uL29">
    <location>
        <begin position="1"/>
        <end position="68"/>
    </location>
</feature>
<feature type="region of interest" description="Disordered" evidence="2">
    <location>
        <begin position="32"/>
        <end position="68"/>
    </location>
</feature>
<feature type="compositionally biased region" description="Basic and acidic residues" evidence="2">
    <location>
        <begin position="45"/>
        <end position="56"/>
    </location>
</feature>
<sequence>MESEMATAKELKELSADDLKQRAAELRETLFQDQLKRRTGSLDNPAERTQHRRDLARVLTVLTQKTKA</sequence>